<feature type="chain" id="PRO_0000233280" description="Zinc finger protein 700">
    <location>
        <begin position="1"/>
        <end position="742"/>
    </location>
</feature>
<feature type="domain" description="KRAB" evidence="2">
    <location>
        <begin position="24"/>
        <end position="104"/>
    </location>
</feature>
<feature type="zinc finger region" description="C2H2-type 1" evidence="1">
    <location>
        <begin position="194"/>
        <end position="216"/>
    </location>
</feature>
<feature type="zinc finger region" description="C2H2-type 2" evidence="1">
    <location>
        <begin position="222"/>
        <end position="244"/>
    </location>
</feature>
<feature type="zinc finger region" description="C2H2-type 3" evidence="1">
    <location>
        <begin position="250"/>
        <end position="272"/>
    </location>
</feature>
<feature type="zinc finger region" description="C2H2-type 4" evidence="1">
    <location>
        <begin position="278"/>
        <end position="300"/>
    </location>
</feature>
<feature type="zinc finger region" description="C2H2-type 5" evidence="1">
    <location>
        <begin position="306"/>
        <end position="328"/>
    </location>
</feature>
<feature type="zinc finger region" description="C2H2-type 6" evidence="1">
    <location>
        <begin position="362"/>
        <end position="384"/>
    </location>
</feature>
<feature type="zinc finger region" description="C2H2-type 7" evidence="1">
    <location>
        <begin position="390"/>
        <end position="412"/>
    </location>
</feature>
<feature type="zinc finger region" description="C2H2-type 8" evidence="1">
    <location>
        <begin position="418"/>
        <end position="440"/>
    </location>
</feature>
<feature type="zinc finger region" description="C2H2-type 9" evidence="1">
    <location>
        <begin position="446"/>
        <end position="468"/>
    </location>
</feature>
<feature type="zinc finger region" description="C2H2-type 10; degenerate" evidence="1">
    <location>
        <begin position="474"/>
        <end position="502"/>
    </location>
</feature>
<feature type="zinc finger region" description="C2H2-type 11" evidence="1">
    <location>
        <begin position="508"/>
        <end position="530"/>
    </location>
</feature>
<feature type="zinc finger region" description="C2H2-type 12" evidence="1">
    <location>
        <begin position="536"/>
        <end position="558"/>
    </location>
</feature>
<feature type="zinc finger region" description="C2H2-type 13" evidence="1">
    <location>
        <begin position="564"/>
        <end position="586"/>
    </location>
</feature>
<feature type="zinc finger region" description="C2H2-type 14" evidence="1">
    <location>
        <begin position="592"/>
        <end position="614"/>
    </location>
</feature>
<feature type="zinc finger region" description="C2H2-type 15" evidence="1">
    <location>
        <begin position="620"/>
        <end position="642"/>
    </location>
</feature>
<feature type="zinc finger region" description="C2H2-type 16" evidence="1">
    <location>
        <begin position="648"/>
        <end position="670"/>
    </location>
</feature>
<feature type="zinc finger region" description="C2H2-type 17" evidence="1">
    <location>
        <begin position="676"/>
        <end position="698"/>
    </location>
</feature>
<feature type="zinc finger region" description="C2H2-type 18" evidence="1">
    <location>
        <begin position="704"/>
        <end position="726"/>
    </location>
</feature>
<feature type="region of interest" description="Disordered" evidence="3">
    <location>
        <begin position="1"/>
        <end position="20"/>
    </location>
</feature>
<feature type="compositionally biased region" description="Basic and acidic residues" evidence="3">
    <location>
        <begin position="8"/>
        <end position="20"/>
    </location>
</feature>
<feature type="sequence variant" id="VAR_052897" description="In dbSNP:rs12327617.">
    <original>E</original>
    <variation>G</variation>
    <location>
        <position position="269"/>
    </location>
</feature>
<feature type="sequence variant" id="VAR_033591" description="In dbSNP:rs17001730.">
    <original>L</original>
    <variation>V</variation>
    <location>
        <position position="321"/>
    </location>
</feature>
<dbReference type="EMBL" id="AL136732">
    <property type="protein sequence ID" value="CAB66666.1"/>
    <property type="molecule type" value="mRNA"/>
</dbReference>
<dbReference type="EMBL" id="CH471106">
    <property type="protein sequence ID" value="EAW84251.1"/>
    <property type="molecule type" value="Genomic_DNA"/>
</dbReference>
<dbReference type="EMBL" id="BC136777">
    <property type="protein sequence ID" value="AAI36778.1"/>
    <property type="molecule type" value="mRNA"/>
</dbReference>
<dbReference type="CCDS" id="CCDS32915.1"/>
<dbReference type="RefSeq" id="NP_001258777.1">
    <property type="nucleotide sequence ID" value="NM_001271848.1"/>
</dbReference>
<dbReference type="RefSeq" id="NP_653167.1">
    <property type="nucleotide sequence ID" value="NM_144566.3"/>
</dbReference>
<dbReference type="SMR" id="Q9H0M5"/>
<dbReference type="FunCoup" id="Q9H0M5">
    <property type="interactions" value="643"/>
</dbReference>
<dbReference type="IntAct" id="Q9H0M5">
    <property type="interactions" value="1"/>
</dbReference>
<dbReference type="STRING" id="9606.ENSP00000479449"/>
<dbReference type="iPTMnet" id="Q9H0M5"/>
<dbReference type="PhosphoSitePlus" id="Q9H0M5"/>
<dbReference type="BioMuta" id="ZNF700"/>
<dbReference type="DMDM" id="74761386"/>
<dbReference type="jPOST" id="Q9H0M5"/>
<dbReference type="MassIVE" id="Q9H0M5"/>
<dbReference type="PaxDb" id="9606-ENSP00000479449"/>
<dbReference type="PeptideAtlas" id="Q9H0M5"/>
<dbReference type="ProteomicsDB" id="80302"/>
<dbReference type="Antibodypedia" id="25970">
    <property type="antibodies" value="22 antibodies from 10 providers"/>
</dbReference>
<dbReference type="DNASU" id="90592"/>
<dbReference type="Ensembl" id="ENST00000254321.10">
    <property type="protein sequence ID" value="ENSP00000254321.4"/>
    <property type="gene ID" value="ENSG00000196757.8"/>
</dbReference>
<dbReference type="GeneID" id="90592"/>
<dbReference type="KEGG" id="hsa:90592"/>
<dbReference type="MANE-Select" id="ENST00000254321.10">
    <property type="protein sequence ID" value="ENSP00000254321.4"/>
    <property type="RefSeq nucleotide sequence ID" value="NM_144566.3"/>
    <property type="RefSeq protein sequence ID" value="NP_653167.1"/>
</dbReference>
<dbReference type="UCSC" id="uc002msu.5">
    <property type="organism name" value="human"/>
</dbReference>
<dbReference type="AGR" id="HGNC:25292"/>
<dbReference type="CTD" id="90592"/>
<dbReference type="DisGeNET" id="90592"/>
<dbReference type="GeneCards" id="ZNF700"/>
<dbReference type="HGNC" id="HGNC:25292">
    <property type="gene designation" value="ZNF700"/>
</dbReference>
<dbReference type="HPA" id="ENSG00000196757">
    <property type="expression patterns" value="Low tissue specificity"/>
</dbReference>
<dbReference type="neXtProt" id="NX_Q9H0M5"/>
<dbReference type="OpenTargets" id="ENSG00000196757"/>
<dbReference type="PharmGKB" id="PA142670497"/>
<dbReference type="VEuPathDB" id="HostDB:ENSG00000196757"/>
<dbReference type="eggNOG" id="KOG1721">
    <property type="taxonomic scope" value="Eukaryota"/>
</dbReference>
<dbReference type="GeneTree" id="ENSGT00950000182755"/>
<dbReference type="HOGENOM" id="CLU_002678_17_1_1"/>
<dbReference type="InParanoid" id="Q9H0M5"/>
<dbReference type="OMA" id="STHSCCQ"/>
<dbReference type="OrthoDB" id="9411774at2759"/>
<dbReference type="PAN-GO" id="Q9H0M5">
    <property type="GO annotations" value="4 GO annotations based on evolutionary models"/>
</dbReference>
<dbReference type="PhylomeDB" id="Q9H0M5"/>
<dbReference type="TreeFam" id="TF343410"/>
<dbReference type="PathwayCommons" id="Q9H0M5"/>
<dbReference type="Reactome" id="R-HSA-212436">
    <property type="pathway name" value="Generic Transcription Pathway"/>
</dbReference>
<dbReference type="SignaLink" id="Q9H0M5"/>
<dbReference type="BioGRID-ORCS" id="90592">
    <property type="hits" value="10 hits in 1167 CRISPR screens"/>
</dbReference>
<dbReference type="GenomeRNAi" id="90592"/>
<dbReference type="Pharos" id="Q9H0M5">
    <property type="development level" value="Tdark"/>
</dbReference>
<dbReference type="PRO" id="PR:Q9H0M5"/>
<dbReference type="Proteomes" id="UP000005640">
    <property type="component" value="Chromosome 19"/>
</dbReference>
<dbReference type="RNAct" id="Q9H0M5">
    <property type="molecule type" value="protein"/>
</dbReference>
<dbReference type="Bgee" id="ENSG00000196757">
    <property type="expression patterns" value="Expressed in granulocyte and 95 other cell types or tissues"/>
</dbReference>
<dbReference type="ExpressionAtlas" id="Q9H0M5">
    <property type="expression patterns" value="baseline and differential"/>
</dbReference>
<dbReference type="GO" id="GO:0005634">
    <property type="term" value="C:nucleus"/>
    <property type="evidence" value="ECO:0000318"/>
    <property type="project" value="GO_Central"/>
</dbReference>
<dbReference type="GO" id="GO:0000981">
    <property type="term" value="F:DNA-binding transcription factor activity, RNA polymerase II-specific"/>
    <property type="evidence" value="ECO:0000318"/>
    <property type="project" value="GO_Central"/>
</dbReference>
<dbReference type="GO" id="GO:0000977">
    <property type="term" value="F:RNA polymerase II transcription regulatory region sequence-specific DNA binding"/>
    <property type="evidence" value="ECO:0000318"/>
    <property type="project" value="GO_Central"/>
</dbReference>
<dbReference type="GO" id="GO:0008270">
    <property type="term" value="F:zinc ion binding"/>
    <property type="evidence" value="ECO:0007669"/>
    <property type="project" value="UniProtKB-KW"/>
</dbReference>
<dbReference type="GO" id="GO:0006357">
    <property type="term" value="P:regulation of transcription by RNA polymerase II"/>
    <property type="evidence" value="ECO:0000318"/>
    <property type="project" value="GO_Central"/>
</dbReference>
<dbReference type="CDD" id="cd07765">
    <property type="entry name" value="KRAB_A-box"/>
    <property type="match status" value="1"/>
</dbReference>
<dbReference type="FunFam" id="3.30.160.60:FF:003708">
    <property type="match status" value="1"/>
</dbReference>
<dbReference type="FunFam" id="3.30.160.60:FF:000006">
    <property type="entry name" value="Zinc finger protein 184 (Kruppel-like)"/>
    <property type="match status" value="1"/>
</dbReference>
<dbReference type="FunFam" id="3.30.160.60:FF:000171">
    <property type="entry name" value="Zinc finger protein 26"/>
    <property type="match status" value="1"/>
</dbReference>
<dbReference type="FunFam" id="3.30.160.60:FF:000184">
    <property type="entry name" value="Zinc finger protein 333"/>
    <property type="match status" value="3"/>
</dbReference>
<dbReference type="FunFam" id="3.30.160.60:FF:002254">
    <property type="entry name" value="Zinc finger protein 540"/>
    <property type="match status" value="5"/>
</dbReference>
<dbReference type="FunFam" id="3.30.160.60:FF:000371">
    <property type="entry name" value="Zinc finger protein 555"/>
    <property type="match status" value="1"/>
</dbReference>
<dbReference type="FunFam" id="3.30.160.60:FF:000156">
    <property type="entry name" value="Zinc finger protein 568"/>
    <property type="match status" value="1"/>
</dbReference>
<dbReference type="FunFam" id="3.30.160.60:FF:001239">
    <property type="entry name" value="Zinc finger protein 615"/>
    <property type="match status" value="1"/>
</dbReference>
<dbReference type="FunFam" id="3.30.160.60:FF:002288">
    <property type="entry name" value="Zinc finger protein 700"/>
    <property type="match status" value="1"/>
</dbReference>
<dbReference type="FunFam" id="3.30.160.60:FF:002415">
    <property type="entry name" value="Zinc finger protein 700"/>
    <property type="match status" value="2"/>
</dbReference>
<dbReference type="FunFam" id="3.30.160.60:FF:002487">
    <property type="entry name" value="Zinc finger protein 700"/>
    <property type="match status" value="1"/>
</dbReference>
<dbReference type="Gene3D" id="6.10.140.140">
    <property type="match status" value="1"/>
</dbReference>
<dbReference type="Gene3D" id="3.30.160.60">
    <property type="entry name" value="Classic Zinc Finger"/>
    <property type="match status" value="20"/>
</dbReference>
<dbReference type="InterPro" id="IPR001909">
    <property type="entry name" value="KRAB"/>
</dbReference>
<dbReference type="InterPro" id="IPR036051">
    <property type="entry name" value="KRAB_dom_sf"/>
</dbReference>
<dbReference type="InterPro" id="IPR050758">
    <property type="entry name" value="Znf_C2H2-type"/>
</dbReference>
<dbReference type="InterPro" id="IPR036236">
    <property type="entry name" value="Znf_C2H2_sf"/>
</dbReference>
<dbReference type="InterPro" id="IPR013087">
    <property type="entry name" value="Znf_C2H2_type"/>
</dbReference>
<dbReference type="PANTHER" id="PTHR23234:SF10">
    <property type="entry name" value="RIKEN CDNA 6720489N17 GENE-RELATED"/>
    <property type="match status" value="1"/>
</dbReference>
<dbReference type="PANTHER" id="PTHR23234">
    <property type="entry name" value="ZNF44 PROTEIN"/>
    <property type="match status" value="1"/>
</dbReference>
<dbReference type="Pfam" id="PF01352">
    <property type="entry name" value="KRAB"/>
    <property type="match status" value="1"/>
</dbReference>
<dbReference type="Pfam" id="PF00096">
    <property type="entry name" value="zf-C2H2"/>
    <property type="match status" value="16"/>
</dbReference>
<dbReference type="SMART" id="SM00349">
    <property type="entry name" value="KRAB"/>
    <property type="match status" value="1"/>
</dbReference>
<dbReference type="SMART" id="SM00355">
    <property type="entry name" value="ZnF_C2H2"/>
    <property type="match status" value="18"/>
</dbReference>
<dbReference type="SUPFAM" id="SSF57667">
    <property type="entry name" value="beta-beta-alpha zinc fingers"/>
    <property type="match status" value="10"/>
</dbReference>
<dbReference type="SUPFAM" id="SSF109640">
    <property type="entry name" value="KRAB domain (Kruppel-associated box)"/>
    <property type="match status" value="1"/>
</dbReference>
<dbReference type="PROSITE" id="PS50805">
    <property type="entry name" value="KRAB"/>
    <property type="match status" value="1"/>
</dbReference>
<dbReference type="PROSITE" id="PS00028">
    <property type="entry name" value="ZINC_FINGER_C2H2_1"/>
    <property type="match status" value="18"/>
</dbReference>
<dbReference type="PROSITE" id="PS50157">
    <property type="entry name" value="ZINC_FINGER_C2H2_2"/>
    <property type="match status" value="21"/>
</dbReference>
<protein>
    <recommendedName>
        <fullName>Zinc finger protein 700</fullName>
    </recommendedName>
</protein>
<reference key="1">
    <citation type="journal article" date="2001" name="Genome Res.">
        <title>Towards a catalog of human genes and proteins: sequencing and analysis of 500 novel complete protein coding human cDNAs.</title>
        <authorList>
            <person name="Wiemann S."/>
            <person name="Weil B."/>
            <person name="Wellenreuther R."/>
            <person name="Gassenhuber J."/>
            <person name="Glassl S."/>
            <person name="Ansorge W."/>
            <person name="Boecher M."/>
            <person name="Bloecker H."/>
            <person name="Bauersachs S."/>
            <person name="Blum H."/>
            <person name="Lauber J."/>
            <person name="Duesterhoeft A."/>
            <person name="Beyer A."/>
            <person name="Koehrer K."/>
            <person name="Strack N."/>
            <person name="Mewes H.-W."/>
            <person name="Ottenwaelder B."/>
            <person name="Obermaier B."/>
            <person name="Tampe J."/>
            <person name="Heubner D."/>
            <person name="Wambutt R."/>
            <person name="Korn B."/>
            <person name="Klein M."/>
            <person name="Poustka A."/>
        </authorList>
    </citation>
    <scope>NUCLEOTIDE SEQUENCE [LARGE SCALE MRNA]</scope>
    <source>
        <tissue>Testis</tissue>
    </source>
</reference>
<reference key="2">
    <citation type="submission" date="2005-07" db="EMBL/GenBank/DDBJ databases">
        <authorList>
            <person name="Mural R.J."/>
            <person name="Istrail S."/>
            <person name="Sutton G.G."/>
            <person name="Florea L."/>
            <person name="Halpern A.L."/>
            <person name="Mobarry C.M."/>
            <person name="Lippert R."/>
            <person name="Walenz B."/>
            <person name="Shatkay H."/>
            <person name="Dew I."/>
            <person name="Miller J.R."/>
            <person name="Flanigan M.J."/>
            <person name="Edwards N.J."/>
            <person name="Bolanos R."/>
            <person name="Fasulo D."/>
            <person name="Halldorsson B.V."/>
            <person name="Hannenhalli S."/>
            <person name="Turner R."/>
            <person name="Yooseph S."/>
            <person name="Lu F."/>
            <person name="Nusskern D.R."/>
            <person name="Shue B.C."/>
            <person name="Zheng X.H."/>
            <person name="Zhong F."/>
            <person name="Delcher A.L."/>
            <person name="Huson D.H."/>
            <person name="Kravitz S.A."/>
            <person name="Mouchard L."/>
            <person name="Reinert K."/>
            <person name="Remington K.A."/>
            <person name="Clark A.G."/>
            <person name="Waterman M.S."/>
            <person name="Eichler E.E."/>
            <person name="Adams M.D."/>
            <person name="Hunkapiller M.W."/>
            <person name="Myers E.W."/>
            <person name="Venter J.C."/>
        </authorList>
    </citation>
    <scope>NUCLEOTIDE SEQUENCE [LARGE SCALE GENOMIC DNA]</scope>
</reference>
<reference key="3">
    <citation type="journal article" date="2004" name="Genome Res.">
        <title>The status, quality, and expansion of the NIH full-length cDNA project: the Mammalian Gene Collection (MGC).</title>
        <authorList>
            <consortium name="The MGC Project Team"/>
        </authorList>
    </citation>
    <scope>NUCLEOTIDE SEQUENCE [LARGE SCALE MRNA]</scope>
    <source>
        <tissue>Brain</tissue>
    </source>
</reference>
<keyword id="KW-0238">DNA-binding</keyword>
<keyword id="KW-0479">Metal-binding</keyword>
<keyword id="KW-0539">Nucleus</keyword>
<keyword id="KW-1267">Proteomics identification</keyword>
<keyword id="KW-1185">Reference proteome</keyword>
<keyword id="KW-0677">Repeat</keyword>
<keyword id="KW-0804">Transcription</keyword>
<keyword id="KW-0805">Transcription regulation</keyword>
<keyword id="KW-0862">Zinc</keyword>
<keyword id="KW-0863">Zinc-finger</keyword>
<proteinExistence type="evidence at protein level"/>
<comment type="function">
    <text>May be involved in transcriptional regulation.</text>
</comment>
<comment type="subcellular location">
    <subcellularLocation>
        <location evidence="4">Nucleus</location>
    </subcellularLocation>
</comment>
<comment type="similarity">
    <text evidence="4">Belongs to the krueppel C2H2-type zinc-finger protein family.</text>
</comment>
<accession>Q9H0M5</accession>
<accession>B9EGU4</accession>
<sequence>MPCCSHRSCREDPGTSESREMDPVAFEDVAVNFTQEEWTLLDISQKNLFREVMLETFRNLTSIGKKWSDQNIEYEYQNPRRSFRSLIEEKVNEIKEDSHCGETFTQVPDDRLNFQEKKASPEVKSCDSFVCAEVGIGNSSFNMSIRGDTGHKAYEYQEYGPKPYKCQQPKNKKAFRYRPSIRTQERDHTGEKPYACKVCGKTFIFHSSIRRHMVMHSGDGTYKCKFCGKAFHSFSLYLIHERTHTGEKPYECKQCGKSFTYSATLQIHERTHTGEKPYECSKCDKAFHSSSSYHRHERSHMGEKPYQCKECGKAFAYTSSLRRHERTHSGKKPYECKQYGEGLSYLISFQTHIRMNSGERPYKCKICGKGFYSAKSFQTHEKTHTGEKRYKCKQCGKAFNLSSSFRYHERIHTGEKPYECKQCGKAFRSASQLRVHGGTHTGEKPYECKECGKAFRSTSHLRVHGRTHTGEKPYECKECGKAFRYVKHLQIHERTEKHIRMPSGERPYKCSICEKGFYSAKSFQTHEKTHTGEKPYECNQCGKAFRCCNSLRYHERTHTGEKPYECKQCGKAFRSASHLRMHERTHTGEKPYECKQCGKAFSCASNLRKHGRTHTGEKPYECKQCGKAFRSASNLQMHERTHTGEKPYECKECEKAFCKFSSFQIHERKHRGEKPYECKHCGNGFTSAKILQIHARTHIGEKHYECKECGKAFNYFSSLHIHARTHMGEKPYECKDCGKAFS</sequence>
<gene>
    <name type="primary">ZNF700</name>
</gene>
<name>ZN700_HUMAN</name>
<evidence type="ECO:0000255" key="1">
    <source>
        <dbReference type="PROSITE-ProRule" id="PRU00042"/>
    </source>
</evidence>
<evidence type="ECO:0000255" key="2">
    <source>
        <dbReference type="PROSITE-ProRule" id="PRU00119"/>
    </source>
</evidence>
<evidence type="ECO:0000256" key="3">
    <source>
        <dbReference type="SAM" id="MobiDB-lite"/>
    </source>
</evidence>
<evidence type="ECO:0000305" key="4"/>
<organism>
    <name type="scientific">Homo sapiens</name>
    <name type="common">Human</name>
    <dbReference type="NCBI Taxonomy" id="9606"/>
    <lineage>
        <taxon>Eukaryota</taxon>
        <taxon>Metazoa</taxon>
        <taxon>Chordata</taxon>
        <taxon>Craniata</taxon>
        <taxon>Vertebrata</taxon>
        <taxon>Euteleostomi</taxon>
        <taxon>Mammalia</taxon>
        <taxon>Eutheria</taxon>
        <taxon>Euarchontoglires</taxon>
        <taxon>Primates</taxon>
        <taxon>Haplorrhini</taxon>
        <taxon>Catarrhini</taxon>
        <taxon>Hominidae</taxon>
        <taxon>Homo</taxon>
    </lineage>
</organism>